<evidence type="ECO:0000305" key="1"/>
<keyword id="KW-1003">Cell membrane</keyword>
<keyword id="KW-0472">Membrane</keyword>
<keyword id="KW-0614">Plasmid</keyword>
<proteinExistence type="predicted"/>
<feature type="chain" id="PRO_0000086986" description="Epidermin biosynthesis protein EpiB">
    <location>
        <begin position="1"/>
        <end position="986"/>
    </location>
</feature>
<comment type="function">
    <text>Involved in the post-translational modification of the lantibiotic epidermin.</text>
</comment>
<comment type="subcellular location">
    <subcellularLocation>
        <location>Cell membrane</location>
    </subcellularLocation>
    <text>Possibly associated with, and anchored to, the cytoplasmic side of the membrane.</text>
</comment>
<comment type="similarity">
    <text evidence="1">To B.subtilis SpaB and L.lactis NisB.</text>
</comment>
<accession>P30195</accession>
<gene>
    <name type="primary">epiB</name>
</gene>
<organism>
    <name type="scientific">Staphylococcus epidermidis</name>
    <dbReference type="NCBI Taxonomy" id="1282"/>
    <lineage>
        <taxon>Bacteria</taxon>
        <taxon>Bacillati</taxon>
        <taxon>Bacillota</taxon>
        <taxon>Bacilli</taxon>
        <taxon>Bacillales</taxon>
        <taxon>Staphylococcaceae</taxon>
        <taxon>Staphylococcus</taxon>
    </lineage>
</organism>
<sequence>MDNIFVPSNIYMVRTPIFSIELYNQFLKSDNIDYDLILQNDIFKESIMTTTYNLYQSIGKIDWEKDNKKTRNVKESLLKYLIRMSTRSTPYGMLSGVALGEFSENNNIKIKDSSFHKKDVKIDGQWLYKLVHYLESDYTYYKDSFVIWNQQNYIYNNRLYLDNNSSITENKRNDVLSVKYNSILVFIHENSKKNITYEELVQLISSKYSIENKEEVKVFVQELINKEIIFSDLRPTLENKNPLDYIINSLNPKNSLVGTLINISNEITKYSKMPLGKGEYKYLDIVNLMSQLFVSKNYLQIDTYIDYSRNELKQSLADNISEAAYILWLLSPNHFGTKTIRNYHEFFMDKYGFEQLVNLKQLLSDINGFGYPKKDSYSFSNNIAFLKEKYLLAIQNNSHIEITENDVKNLEKNNTVSKINAPVSTEIYSEIYFGNSIKGYEDFAVISPILGSFNAGATFGRFTGNFNIKKKNQLQKEIVHHYNNYMNENGLEISQLNEGPLNSRNVNILNNNRIYNTCLNLNLPKSDIDINDIFIGATFNKLYLYSEKHDSRIVFVSNSMFNYEFGSELYKFLREISFEKTKFIQPITEEGIDSLPFCPRIIYKNIILKPATWKINSEMFSETENWLNRFATIREKWHIPKDVIIAFGDNRLLLNLLNDKHLIILKKELKKHGRIRILESFINESNNERMLEIVTPLYKKTSLKEQSFIIPKNRNKHFNNLKDWFSIHLSIPKTYQDNFIQDYLLPFITELKVNNFINKFFYIKFKEDEDFIKLRLLREDEDYSQIYSFIKNWKDYCLLNSELYDYSIVDYVPEVYRYGGPHVIEDIENFFMYDSLLSINIIQSEFKIPKEFIVAISIDFLLDYLEINKSEKEEILINNAEDLYRSNDIREYKNLLAKLTNPKNDYEILKKEFPNLHEFLFNKISILENLKKTLQKSLYTSRSRIIGSFIHMRCNRIFGINPEKEKFVLSIFNEITKTKKYWDGCD</sequence>
<name>EPIB_STAEP</name>
<protein>
    <recommendedName>
        <fullName>Epidermin biosynthesis protein EpiB</fullName>
    </recommendedName>
</protein>
<reference key="1">
    <citation type="journal article" date="1992" name="Eur. J. Biochem.">
        <title>Analysis of genes involved in the biosynthesis of lantibiotic epidermin.</title>
        <authorList>
            <person name="Schnell N."/>
            <person name="Engelke G."/>
            <person name="Augustin J."/>
            <person name="Rosenstein R."/>
            <person name="Ungermann V."/>
            <person name="Goetz F."/>
            <person name="Entian K.-D."/>
        </authorList>
    </citation>
    <scope>NUCLEOTIDE SEQUENCE [GENOMIC DNA]</scope>
    <source>
        <strain>TU 3298 / DSM 3095</strain>
    </source>
</reference>
<geneLocation type="plasmid">
    <name>pTu 32</name>
</geneLocation>
<dbReference type="EMBL" id="X62386">
    <property type="protein sequence ID" value="CAA44253.1"/>
    <property type="molecule type" value="Genomic_DNA"/>
</dbReference>
<dbReference type="SMR" id="P30195"/>
<dbReference type="GO" id="GO:0005886">
    <property type="term" value="C:plasma membrane"/>
    <property type="evidence" value="ECO:0007669"/>
    <property type="project" value="UniProtKB-SubCell"/>
</dbReference>
<dbReference type="InterPro" id="IPR006827">
    <property type="entry name" value="Lant_deHydtase_N"/>
</dbReference>
<dbReference type="InterPro" id="IPR023809">
    <property type="entry name" value="Thiopep_bacteriocin_synth_dom"/>
</dbReference>
<dbReference type="NCBIfam" id="TIGR03891">
    <property type="entry name" value="thiopep_ocin"/>
    <property type="match status" value="1"/>
</dbReference>
<dbReference type="Pfam" id="PF14028">
    <property type="entry name" value="Lant_dehydr_C"/>
    <property type="match status" value="1"/>
</dbReference>
<dbReference type="Pfam" id="PF04738">
    <property type="entry name" value="Lant_dehydr_N"/>
    <property type="match status" value="1"/>
</dbReference>